<dbReference type="EC" id="2.5.1.75" evidence="1"/>
<dbReference type="EMBL" id="AM039952">
    <property type="protein sequence ID" value="CAJ23444.1"/>
    <property type="molecule type" value="Genomic_DNA"/>
</dbReference>
<dbReference type="RefSeq" id="WP_011347107.1">
    <property type="nucleotide sequence ID" value="NZ_CP017190.1"/>
</dbReference>
<dbReference type="SMR" id="Q3BUR5"/>
<dbReference type="STRING" id="456327.BJD11_13710"/>
<dbReference type="KEGG" id="xcv:XCV1767"/>
<dbReference type="eggNOG" id="COG0324">
    <property type="taxonomic scope" value="Bacteria"/>
</dbReference>
<dbReference type="HOGENOM" id="CLU_032616_0_0_6"/>
<dbReference type="Proteomes" id="UP000007069">
    <property type="component" value="Chromosome"/>
</dbReference>
<dbReference type="GO" id="GO:0005524">
    <property type="term" value="F:ATP binding"/>
    <property type="evidence" value="ECO:0007669"/>
    <property type="project" value="UniProtKB-UniRule"/>
</dbReference>
<dbReference type="GO" id="GO:0052381">
    <property type="term" value="F:tRNA dimethylallyltransferase activity"/>
    <property type="evidence" value="ECO:0007669"/>
    <property type="project" value="UniProtKB-UniRule"/>
</dbReference>
<dbReference type="GO" id="GO:0006400">
    <property type="term" value="P:tRNA modification"/>
    <property type="evidence" value="ECO:0007669"/>
    <property type="project" value="TreeGrafter"/>
</dbReference>
<dbReference type="FunFam" id="1.10.20.140:FF:000001">
    <property type="entry name" value="tRNA dimethylallyltransferase"/>
    <property type="match status" value="1"/>
</dbReference>
<dbReference type="Gene3D" id="1.10.20.140">
    <property type="match status" value="1"/>
</dbReference>
<dbReference type="Gene3D" id="3.40.50.300">
    <property type="entry name" value="P-loop containing nucleotide triphosphate hydrolases"/>
    <property type="match status" value="1"/>
</dbReference>
<dbReference type="HAMAP" id="MF_00185">
    <property type="entry name" value="IPP_trans"/>
    <property type="match status" value="1"/>
</dbReference>
<dbReference type="InterPro" id="IPR039657">
    <property type="entry name" value="Dimethylallyltransferase"/>
</dbReference>
<dbReference type="InterPro" id="IPR018022">
    <property type="entry name" value="IPT"/>
</dbReference>
<dbReference type="InterPro" id="IPR027417">
    <property type="entry name" value="P-loop_NTPase"/>
</dbReference>
<dbReference type="NCBIfam" id="TIGR00174">
    <property type="entry name" value="miaA"/>
    <property type="match status" value="1"/>
</dbReference>
<dbReference type="PANTHER" id="PTHR11088">
    <property type="entry name" value="TRNA DIMETHYLALLYLTRANSFERASE"/>
    <property type="match status" value="1"/>
</dbReference>
<dbReference type="PANTHER" id="PTHR11088:SF60">
    <property type="entry name" value="TRNA DIMETHYLALLYLTRANSFERASE"/>
    <property type="match status" value="1"/>
</dbReference>
<dbReference type="Pfam" id="PF01715">
    <property type="entry name" value="IPPT"/>
    <property type="match status" value="1"/>
</dbReference>
<dbReference type="SUPFAM" id="SSF52540">
    <property type="entry name" value="P-loop containing nucleoside triphosphate hydrolases"/>
    <property type="match status" value="1"/>
</dbReference>
<protein>
    <recommendedName>
        <fullName evidence="1">tRNA dimethylallyltransferase</fullName>
        <ecNumber evidence="1">2.5.1.75</ecNumber>
    </recommendedName>
    <alternativeName>
        <fullName evidence="1">Dimethylallyl diphosphate:tRNA dimethylallyltransferase</fullName>
        <shortName evidence="1">DMAPP:tRNA dimethylallyltransferase</shortName>
        <shortName evidence="1">DMATase</shortName>
    </alternativeName>
    <alternativeName>
        <fullName evidence="1">Isopentenyl-diphosphate:tRNA isopentenyltransferase</fullName>
        <shortName evidence="1">IPP transferase</shortName>
        <shortName evidence="1">IPPT</shortName>
        <shortName evidence="1">IPTase</shortName>
    </alternativeName>
</protein>
<keyword id="KW-0067">ATP-binding</keyword>
<keyword id="KW-0460">Magnesium</keyword>
<keyword id="KW-0547">Nucleotide-binding</keyword>
<keyword id="KW-0808">Transferase</keyword>
<keyword id="KW-0819">tRNA processing</keyword>
<comment type="function">
    <text evidence="1">Catalyzes the transfer of a dimethylallyl group onto the adenine at position 37 in tRNAs that read codons beginning with uridine, leading to the formation of N6-(dimethylallyl)adenosine (i(6)A).</text>
</comment>
<comment type="catalytic activity">
    <reaction evidence="1">
        <text>adenosine(37) in tRNA + dimethylallyl diphosphate = N(6)-dimethylallyladenosine(37) in tRNA + diphosphate</text>
        <dbReference type="Rhea" id="RHEA:26482"/>
        <dbReference type="Rhea" id="RHEA-COMP:10162"/>
        <dbReference type="Rhea" id="RHEA-COMP:10375"/>
        <dbReference type="ChEBI" id="CHEBI:33019"/>
        <dbReference type="ChEBI" id="CHEBI:57623"/>
        <dbReference type="ChEBI" id="CHEBI:74411"/>
        <dbReference type="ChEBI" id="CHEBI:74415"/>
        <dbReference type="EC" id="2.5.1.75"/>
    </reaction>
</comment>
<comment type="cofactor">
    <cofactor evidence="1">
        <name>Mg(2+)</name>
        <dbReference type="ChEBI" id="CHEBI:18420"/>
    </cofactor>
</comment>
<comment type="subunit">
    <text evidence="1">Monomer.</text>
</comment>
<comment type="similarity">
    <text evidence="1">Belongs to the IPP transferase family.</text>
</comment>
<feature type="chain" id="PRO_1000020684" description="tRNA dimethylallyltransferase">
    <location>
        <begin position="1"/>
        <end position="327"/>
    </location>
</feature>
<feature type="region of interest" description="Interaction with substrate tRNA" evidence="1">
    <location>
        <begin position="39"/>
        <end position="42"/>
    </location>
</feature>
<feature type="region of interest" description="Interaction with substrate tRNA" evidence="1">
    <location>
        <begin position="163"/>
        <end position="167"/>
    </location>
</feature>
<feature type="binding site" evidence="1">
    <location>
        <begin position="14"/>
        <end position="21"/>
    </location>
    <ligand>
        <name>ATP</name>
        <dbReference type="ChEBI" id="CHEBI:30616"/>
    </ligand>
</feature>
<feature type="binding site" evidence="1">
    <location>
        <begin position="16"/>
        <end position="21"/>
    </location>
    <ligand>
        <name>substrate</name>
    </ligand>
</feature>
<feature type="site" description="Interaction with substrate tRNA" evidence="1">
    <location>
        <position position="105"/>
    </location>
</feature>
<feature type="site" description="Interaction with substrate tRNA" evidence="1">
    <location>
        <position position="127"/>
    </location>
</feature>
<reference key="1">
    <citation type="journal article" date="2005" name="J. Bacteriol.">
        <title>Insights into genome plasticity and pathogenicity of the plant pathogenic Bacterium Xanthomonas campestris pv. vesicatoria revealed by the complete genome sequence.</title>
        <authorList>
            <person name="Thieme F."/>
            <person name="Koebnik R."/>
            <person name="Bekel T."/>
            <person name="Berger C."/>
            <person name="Boch J."/>
            <person name="Buettner D."/>
            <person name="Caldana C."/>
            <person name="Gaigalat L."/>
            <person name="Goesmann A."/>
            <person name="Kay S."/>
            <person name="Kirchner O."/>
            <person name="Lanz C."/>
            <person name="Linke B."/>
            <person name="McHardy A.C."/>
            <person name="Meyer F."/>
            <person name="Mittenhuber G."/>
            <person name="Nies D.H."/>
            <person name="Niesbach-Kloesgen U."/>
            <person name="Patschkowski T."/>
            <person name="Rueckert C."/>
            <person name="Rupp O."/>
            <person name="Schneiker S."/>
            <person name="Schuster S.C."/>
            <person name="Vorhoelter F.J."/>
            <person name="Weber E."/>
            <person name="Puehler A."/>
            <person name="Bonas U."/>
            <person name="Bartels D."/>
            <person name="Kaiser O."/>
        </authorList>
    </citation>
    <scope>NUCLEOTIDE SEQUENCE [LARGE SCALE GENOMIC DNA]</scope>
    <source>
        <strain>85-10</strain>
    </source>
</reference>
<name>MIAA_XANE5</name>
<gene>
    <name evidence="1" type="primary">miaA</name>
    <name type="ordered locus">XCV1767</name>
</gene>
<sequence>MPVDQRPLAIAVMGPTASGKTALALEAAERWNGEIVSVDSALVYRGLEIGAAKPDAPMRAAVPHHLLDLRDPWQVYSAAEFATDARLAIAQIVARGKLPILAGGTGLYFRALLEGLSHLPEADQTVRASIAAEAQQIGWAGLHAQLARVDPVAAARIHATDPQRIQRALEVYRISGRPISAWQALPPGPRLPVRVLKVVLAPRERAVLHARIAHRLDAMLAQDFLGEVQRLRALPQMQAVAAPLDLPAVRAVGYRQAWQYLDGAGGLAEFRDKAIQATRQLAKRQLTWLRGELDARWFDPERDRHQLEDAIVGFLADRPAVRQASGV</sequence>
<proteinExistence type="inferred from homology"/>
<evidence type="ECO:0000255" key="1">
    <source>
        <dbReference type="HAMAP-Rule" id="MF_00185"/>
    </source>
</evidence>
<accession>Q3BUR5</accession>
<organism>
    <name type="scientific">Xanthomonas euvesicatoria pv. vesicatoria (strain 85-10)</name>
    <name type="common">Xanthomonas campestris pv. vesicatoria</name>
    <dbReference type="NCBI Taxonomy" id="316273"/>
    <lineage>
        <taxon>Bacteria</taxon>
        <taxon>Pseudomonadati</taxon>
        <taxon>Pseudomonadota</taxon>
        <taxon>Gammaproteobacteria</taxon>
        <taxon>Lysobacterales</taxon>
        <taxon>Lysobacteraceae</taxon>
        <taxon>Xanthomonas</taxon>
    </lineage>
</organism>